<dbReference type="EMBL" id="CP001657">
    <property type="protein sequence ID" value="ACT14225.1"/>
    <property type="molecule type" value="Genomic_DNA"/>
</dbReference>
<dbReference type="RefSeq" id="WP_015841362.1">
    <property type="nucleotide sequence ID" value="NC_012917.1"/>
</dbReference>
<dbReference type="SMR" id="C6DCQ0"/>
<dbReference type="STRING" id="561230.PC1_3202"/>
<dbReference type="KEGG" id="pct:PC1_3202"/>
<dbReference type="eggNOG" id="COG0806">
    <property type="taxonomic scope" value="Bacteria"/>
</dbReference>
<dbReference type="HOGENOM" id="CLU_077636_1_0_6"/>
<dbReference type="OrthoDB" id="9783509at2"/>
<dbReference type="Proteomes" id="UP000002736">
    <property type="component" value="Chromosome"/>
</dbReference>
<dbReference type="GO" id="GO:0005737">
    <property type="term" value="C:cytoplasm"/>
    <property type="evidence" value="ECO:0007669"/>
    <property type="project" value="UniProtKB-SubCell"/>
</dbReference>
<dbReference type="GO" id="GO:0005840">
    <property type="term" value="C:ribosome"/>
    <property type="evidence" value="ECO:0007669"/>
    <property type="project" value="InterPro"/>
</dbReference>
<dbReference type="GO" id="GO:0043022">
    <property type="term" value="F:ribosome binding"/>
    <property type="evidence" value="ECO:0007669"/>
    <property type="project" value="InterPro"/>
</dbReference>
<dbReference type="GO" id="GO:0042274">
    <property type="term" value="P:ribosomal small subunit biogenesis"/>
    <property type="evidence" value="ECO:0007669"/>
    <property type="project" value="UniProtKB-UniRule"/>
</dbReference>
<dbReference type="GO" id="GO:0006364">
    <property type="term" value="P:rRNA processing"/>
    <property type="evidence" value="ECO:0007669"/>
    <property type="project" value="UniProtKB-UniRule"/>
</dbReference>
<dbReference type="FunFam" id="2.30.30.240:FF:000001">
    <property type="entry name" value="Ribosome maturation factor RimM"/>
    <property type="match status" value="1"/>
</dbReference>
<dbReference type="FunFam" id="2.40.30.60:FF:000001">
    <property type="entry name" value="Ribosome maturation factor RimM"/>
    <property type="match status" value="1"/>
</dbReference>
<dbReference type="Gene3D" id="2.30.30.240">
    <property type="entry name" value="PRC-barrel domain"/>
    <property type="match status" value="1"/>
</dbReference>
<dbReference type="Gene3D" id="2.40.30.60">
    <property type="entry name" value="RimM"/>
    <property type="match status" value="1"/>
</dbReference>
<dbReference type="HAMAP" id="MF_00014">
    <property type="entry name" value="Ribosome_mat_RimM"/>
    <property type="match status" value="1"/>
</dbReference>
<dbReference type="InterPro" id="IPR011033">
    <property type="entry name" value="PRC_barrel-like_sf"/>
</dbReference>
<dbReference type="InterPro" id="IPR056792">
    <property type="entry name" value="PRC_RimM"/>
</dbReference>
<dbReference type="InterPro" id="IPR011961">
    <property type="entry name" value="RimM"/>
</dbReference>
<dbReference type="InterPro" id="IPR002676">
    <property type="entry name" value="RimM_N"/>
</dbReference>
<dbReference type="InterPro" id="IPR036976">
    <property type="entry name" value="RimM_N_sf"/>
</dbReference>
<dbReference type="InterPro" id="IPR009000">
    <property type="entry name" value="Transl_B-barrel_sf"/>
</dbReference>
<dbReference type="NCBIfam" id="TIGR02273">
    <property type="entry name" value="16S_RimM"/>
    <property type="match status" value="1"/>
</dbReference>
<dbReference type="PANTHER" id="PTHR33692">
    <property type="entry name" value="RIBOSOME MATURATION FACTOR RIMM"/>
    <property type="match status" value="1"/>
</dbReference>
<dbReference type="PANTHER" id="PTHR33692:SF1">
    <property type="entry name" value="RIBOSOME MATURATION FACTOR RIMM"/>
    <property type="match status" value="1"/>
</dbReference>
<dbReference type="Pfam" id="PF24986">
    <property type="entry name" value="PRC_RimM"/>
    <property type="match status" value="1"/>
</dbReference>
<dbReference type="Pfam" id="PF01782">
    <property type="entry name" value="RimM"/>
    <property type="match status" value="1"/>
</dbReference>
<dbReference type="SUPFAM" id="SSF50346">
    <property type="entry name" value="PRC-barrel domain"/>
    <property type="match status" value="1"/>
</dbReference>
<dbReference type="SUPFAM" id="SSF50447">
    <property type="entry name" value="Translation proteins"/>
    <property type="match status" value="1"/>
</dbReference>
<evidence type="ECO:0000255" key="1">
    <source>
        <dbReference type="HAMAP-Rule" id="MF_00014"/>
    </source>
</evidence>
<protein>
    <recommendedName>
        <fullName evidence="1">Ribosome maturation factor RimM</fullName>
    </recommendedName>
</protein>
<proteinExistence type="inferred from homology"/>
<reference key="1">
    <citation type="submission" date="2009-07" db="EMBL/GenBank/DDBJ databases">
        <title>Complete sequence of Pectobacterium carotovorum subsp. carotovorum PC1.</title>
        <authorList>
            <consortium name="US DOE Joint Genome Institute"/>
            <person name="Lucas S."/>
            <person name="Copeland A."/>
            <person name="Lapidus A."/>
            <person name="Glavina del Rio T."/>
            <person name="Tice H."/>
            <person name="Bruce D."/>
            <person name="Goodwin L."/>
            <person name="Pitluck S."/>
            <person name="Munk A.C."/>
            <person name="Brettin T."/>
            <person name="Detter J.C."/>
            <person name="Han C."/>
            <person name="Tapia R."/>
            <person name="Larimer F."/>
            <person name="Land M."/>
            <person name="Hauser L."/>
            <person name="Kyrpides N."/>
            <person name="Mikhailova N."/>
            <person name="Balakrishnan V."/>
            <person name="Glasner J."/>
            <person name="Perna N.T."/>
        </authorList>
    </citation>
    <scope>NUCLEOTIDE SEQUENCE [LARGE SCALE GENOMIC DNA]</scope>
    <source>
        <strain>PC1</strain>
    </source>
</reference>
<keyword id="KW-0143">Chaperone</keyword>
<keyword id="KW-0963">Cytoplasm</keyword>
<keyword id="KW-0690">Ribosome biogenesis</keyword>
<keyword id="KW-0698">rRNA processing</keyword>
<organism>
    <name type="scientific">Pectobacterium carotovorum subsp. carotovorum (strain PC1)</name>
    <dbReference type="NCBI Taxonomy" id="561230"/>
    <lineage>
        <taxon>Bacteria</taxon>
        <taxon>Pseudomonadati</taxon>
        <taxon>Pseudomonadota</taxon>
        <taxon>Gammaproteobacteria</taxon>
        <taxon>Enterobacterales</taxon>
        <taxon>Pectobacteriaceae</taxon>
        <taxon>Pectobacterium</taxon>
    </lineage>
</organism>
<name>RIMM_PECCP</name>
<comment type="function">
    <text evidence="1">An accessory protein needed during the final step in the assembly of 30S ribosomal subunit, possibly for assembly of the head region. Essential for efficient processing of 16S rRNA. May be needed both before and after RbfA during the maturation of 16S rRNA. It has affinity for free ribosomal 30S subunits but not for 70S ribosomes.</text>
</comment>
<comment type="subunit">
    <text evidence="1">Binds ribosomal protein uS19.</text>
</comment>
<comment type="subcellular location">
    <subcellularLocation>
        <location evidence="1">Cytoplasm</location>
    </subcellularLocation>
</comment>
<comment type="domain">
    <text evidence="1">The PRC barrel domain binds ribosomal protein uS19.</text>
</comment>
<comment type="similarity">
    <text evidence="1">Belongs to the RimM family.</text>
</comment>
<gene>
    <name evidence="1" type="primary">rimM</name>
    <name type="ordered locus">PC1_3202</name>
</gene>
<accession>C6DCQ0</accession>
<sequence length="182" mass="20470">MSNQLSPKPPVNPIVMGKIGSAYGIRGWLRVFSSTEDAESIFDYQPWFIQSKSGWQLVEIEGWKYHNQDLIIKVKGTDDRDAANLLTNCEIVVDSSQLPDLGEGDYYWKDLMGCQVVTVAGYELGKVIDMMETGSNDVMVIKANLKDAFGVKERLVPFLTEQVVKRVDLSTQTIEVDWDPGF</sequence>
<feature type="chain" id="PRO_1000201810" description="Ribosome maturation factor RimM">
    <location>
        <begin position="1"/>
        <end position="182"/>
    </location>
</feature>
<feature type="domain" description="PRC barrel" evidence="1">
    <location>
        <begin position="102"/>
        <end position="182"/>
    </location>
</feature>